<protein>
    <recommendedName>
        <fullName evidence="1">Large ribosomal subunit protein bL21</fullName>
    </recommendedName>
    <alternativeName>
        <fullName evidence="2">50S ribosomal protein L21</fullName>
    </alternativeName>
</protein>
<proteinExistence type="inferred from homology"/>
<dbReference type="EMBL" id="CT573326">
    <property type="protein sequence ID" value="CAK13739.1"/>
    <property type="molecule type" value="Genomic_DNA"/>
</dbReference>
<dbReference type="RefSeq" id="WP_011532169.1">
    <property type="nucleotide sequence ID" value="NC_008027.1"/>
</dbReference>
<dbReference type="SMR" id="Q1IF15"/>
<dbReference type="STRING" id="384676.PSEEN0825"/>
<dbReference type="GeneID" id="32804131"/>
<dbReference type="KEGG" id="pen:PSEEN0825"/>
<dbReference type="eggNOG" id="COG0261">
    <property type="taxonomic scope" value="Bacteria"/>
</dbReference>
<dbReference type="HOGENOM" id="CLU_061463_3_2_6"/>
<dbReference type="OrthoDB" id="9813334at2"/>
<dbReference type="Proteomes" id="UP000000658">
    <property type="component" value="Chromosome"/>
</dbReference>
<dbReference type="GO" id="GO:0005737">
    <property type="term" value="C:cytoplasm"/>
    <property type="evidence" value="ECO:0007669"/>
    <property type="project" value="UniProtKB-ARBA"/>
</dbReference>
<dbReference type="GO" id="GO:1990904">
    <property type="term" value="C:ribonucleoprotein complex"/>
    <property type="evidence" value="ECO:0007669"/>
    <property type="project" value="UniProtKB-KW"/>
</dbReference>
<dbReference type="GO" id="GO:0005840">
    <property type="term" value="C:ribosome"/>
    <property type="evidence" value="ECO:0007669"/>
    <property type="project" value="UniProtKB-KW"/>
</dbReference>
<dbReference type="GO" id="GO:0019843">
    <property type="term" value="F:rRNA binding"/>
    <property type="evidence" value="ECO:0007669"/>
    <property type="project" value="UniProtKB-UniRule"/>
</dbReference>
<dbReference type="GO" id="GO:0003735">
    <property type="term" value="F:structural constituent of ribosome"/>
    <property type="evidence" value="ECO:0007669"/>
    <property type="project" value="InterPro"/>
</dbReference>
<dbReference type="GO" id="GO:0006412">
    <property type="term" value="P:translation"/>
    <property type="evidence" value="ECO:0007669"/>
    <property type="project" value="UniProtKB-UniRule"/>
</dbReference>
<dbReference type="HAMAP" id="MF_01363">
    <property type="entry name" value="Ribosomal_bL21"/>
    <property type="match status" value="1"/>
</dbReference>
<dbReference type="InterPro" id="IPR028909">
    <property type="entry name" value="bL21-like"/>
</dbReference>
<dbReference type="InterPro" id="IPR036164">
    <property type="entry name" value="bL21-like_sf"/>
</dbReference>
<dbReference type="InterPro" id="IPR001787">
    <property type="entry name" value="Ribosomal_bL21"/>
</dbReference>
<dbReference type="InterPro" id="IPR018258">
    <property type="entry name" value="Ribosomal_bL21_CS"/>
</dbReference>
<dbReference type="NCBIfam" id="TIGR00061">
    <property type="entry name" value="L21"/>
    <property type="match status" value="1"/>
</dbReference>
<dbReference type="PANTHER" id="PTHR21349">
    <property type="entry name" value="50S RIBOSOMAL PROTEIN L21"/>
    <property type="match status" value="1"/>
</dbReference>
<dbReference type="PANTHER" id="PTHR21349:SF0">
    <property type="entry name" value="LARGE RIBOSOMAL SUBUNIT PROTEIN BL21M"/>
    <property type="match status" value="1"/>
</dbReference>
<dbReference type="Pfam" id="PF00829">
    <property type="entry name" value="Ribosomal_L21p"/>
    <property type="match status" value="1"/>
</dbReference>
<dbReference type="SUPFAM" id="SSF141091">
    <property type="entry name" value="L21p-like"/>
    <property type="match status" value="1"/>
</dbReference>
<dbReference type="PROSITE" id="PS01169">
    <property type="entry name" value="RIBOSOMAL_L21"/>
    <property type="match status" value="1"/>
</dbReference>
<keyword id="KW-0687">Ribonucleoprotein</keyword>
<keyword id="KW-0689">Ribosomal protein</keyword>
<keyword id="KW-0694">RNA-binding</keyword>
<keyword id="KW-0699">rRNA-binding</keyword>
<accession>Q1IF15</accession>
<comment type="function">
    <text evidence="1">This protein binds to 23S rRNA in the presence of protein L20.</text>
</comment>
<comment type="subunit">
    <text evidence="1">Part of the 50S ribosomal subunit. Contacts protein L20.</text>
</comment>
<comment type="similarity">
    <text evidence="1">Belongs to the bacterial ribosomal protein bL21 family.</text>
</comment>
<evidence type="ECO:0000255" key="1">
    <source>
        <dbReference type="HAMAP-Rule" id="MF_01363"/>
    </source>
</evidence>
<evidence type="ECO:0000305" key="2"/>
<organism>
    <name type="scientific">Pseudomonas entomophila (strain L48)</name>
    <dbReference type="NCBI Taxonomy" id="384676"/>
    <lineage>
        <taxon>Bacteria</taxon>
        <taxon>Pseudomonadati</taxon>
        <taxon>Pseudomonadota</taxon>
        <taxon>Gammaproteobacteria</taxon>
        <taxon>Pseudomonadales</taxon>
        <taxon>Pseudomonadaceae</taxon>
        <taxon>Pseudomonas</taxon>
    </lineage>
</organism>
<sequence length="104" mass="11604">MSYAVIVTGGKQYKVAEGEFLKIEKLEVATGESVTFDRVLLVANGDDVTIGAPVVAGAKVVAEVVSQGRHDKVRIIKFRRRKHHMKRMGHRQWFTEIKITGIQA</sequence>
<name>RL21_PSEE4</name>
<gene>
    <name evidence="1" type="primary">rplU</name>
    <name type="ordered locus">PSEEN0825</name>
</gene>
<feature type="chain" id="PRO_1000067878" description="Large ribosomal subunit protein bL21">
    <location>
        <begin position="1"/>
        <end position="104"/>
    </location>
</feature>
<reference key="1">
    <citation type="journal article" date="2006" name="Nat. Biotechnol.">
        <title>Complete genome sequence of the entomopathogenic and metabolically versatile soil bacterium Pseudomonas entomophila.</title>
        <authorList>
            <person name="Vodovar N."/>
            <person name="Vallenet D."/>
            <person name="Cruveiller S."/>
            <person name="Rouy Z."/>
            <person name="Barbe V."/>
            <person name="Acosta C."/>
            <person name="Cattolico L."/>
            <person name="Jubin C."/>
            <person name="Lajus A."/>
            <person name="Segurens B."/>
            <person name="Vacherie B."/>
            <person name="Wincker P."/>
            <person name="Weissenbach J."/>
            <person name="Lemaitre B."/>
            <person name="Medigue C."/>
            <person name="Boccard F."/>
        </authorList>
    </citation>
    <scope>NUCLEOTIDE SEQUENCE [LARGE SCALE GENOMIC DNA]</scope>
    <source>
        <strain>L48</strain>
    </source>
</reference>